<protein>
    <recommendedName>
        <fullName evidence="1">Adenine deaminase</fullName>
        <shortName evidence="1">Adenase</shortName>
        <shortName evidence="1">Adenine aminase</shortName>
        <ecNumber evidence="1">3.5.4.2</ecNumber>
    </recommendedName>
</protein>
<feature type="chain" id="PRO_1000087545" description="Adenine deaminase">
    <location>
        <begin position="1"/>
        <end position="571"/>
    </location>
</feature>
<evidence type="ECO:0000255" key="1">
    <source>
        <dbReference type="HAMAP-Rule" id="MF_01518"/>
    </source>
</evidence>
<comment type="catalytic activity">
    <reaction evidence="1">
        <text>adenine + H2O + H(+) = hypoxanthine + NH4(+)</text>
        <dbReference type="Rhea" id="RHEA:23688"/>
        <dbReference type="ChEBI" id="CHEBI:15377"/>
        <dbReference type="ChEBI" id="CHEBI:15378"/>
        <dbReference type="ChEBI" id="CHEBI:16708"/>
        <dbReference type="ChEBI" id="CHEBI:17368"/>
        <dbReference type="ChEBI" id="CHEBI:28938"/>
        <dbReference type="EC" id="3.5.4.2"/>
    </reaction>
</comment>
<comment type="cofactor">
    <cofactor evidence="1">
        <name>Mn(2+)</name>
        <dbReference type="ChEBI" id="CHEBI:29035"/>
    </cofactor>
</comment>
<comment type="similarity">
    <text evidence="1">Belongs to the metallo-dependent hydrolases superfamily. Adenine deaminase family.</text>
</comment>
<accession>A5FR71</accession>
<reference key="1">
    <citation type="submission" date="2007-05" db="EMBL/GenBank/DDBJ databases">
        <title>Complete sequence of Dehalococcoides sp. BAV1.</title>
        <authorList>
            <consortium name="US DOE Joint Genome Institute"/>
            <person name="Copeland A."/>
            <person name="Lucas S."/>
            <person name="Lapidus A."/>
            <person name="Barry K."/>
            <person name="Detter J.C."/>
            <person name="Glavina del Rio T."/>
            <person name="Hammon N."/>
            <person name="Israni S."/>
            <person name="Pitluck S."/>
            <person name="Lowry S."/>
            <person name="Clum A."/>
            <person name="Schmutz J."/>
            <person name="Larimer F."/>
            <person name="Land M."/>
            <person name="Hauser L."/>
            <person name="Kyrpides N."/>
            <person name="Kim E."/>
            <person name="Ritalahti K.M."/>
            <person name="Loeffler F."/>
            <person name="Richardson P."/>
        </authorList>
    </citation>
    <scope>NUCLEOTIDE SEQUENCE [LARGE SCALE GENOMIC DNA]</scope>
    <source>
        <strain>ATCC BAA-2100 / JCM 16839 / KCTC 5957 / BAV1</strain>
    </source>
</reference>
<dbReference type="EC" id="3.5.4.2" evidence="1"/>
<dbReference type="EMBL" id="CP000688">
    <property type="protein sequence ID" value="ABQ17301.1"/>
    <property type="molecule type" value="Genomic_DNA"/>
</dbReference>
<dbReference type="SMR" id="A5FR71"/>
<dbReference type="KEGG" id="deb:DehaBAV1_0717"/>
<dbReference type="PATRIC" id="fig|216389.18.peg.766"/>
<dbReference type="HOGENOM" id="CLU_027935_0_0_0"/>
<dbReference type="GO" id="GO:0000034">
    <property type="term" value="F:adenine deaminase activity"/>
    <property type="evidence" value="ECO:0007669"/>
    <property type="project" value="UniProtKB-UniRule"/>
</dbReference>
<dbReference type="GO" id="GO:0006146">
    <property type="term" value="P:adenine catabolic process"/>
    <property type="evidence" value="ECO:0007669"/>
    <property type="project" value="InterPro"/>
</dbReference>
<dbReference type="CDD" id="cd01295">
    <property type="entry name" value="AdeC"/>
    <property type="match status" value="1"/>
</dbReference>
<dbReference type="Gene3D" id="3.20.20.140">
    <property type="entry name" value="Metal-dependent hydrolases"/>
    <property type="match status" value="1"/>
</dbReference>
<dbReference type="Gene3D" id="2.30.40.10">
    <property type="entry name" value="Urease, subunit C, domain 1"/>
    <property type="match status" value="1"/>
</dbReference>
<dbReference type="HAMAP" id="MF_01518">
    <property type="entry name" value="Adenine_deamin"/>
    <property type="match status" value="1"/>
</dbReference>
<dbReference type="InterPro" id="IPR006679">
    <property type="entry name" value="Adenine_deam"/>
</dbReference>
<dbReference type="InterPro" id="IPR026912">
    <property type="entry name" value="Adenine_deam_C"/>
</dbReference>
<dbReference type="InterPro" id="IPR006680">
    <property type="entry name" value="Amidohydro-rel"/>
</dbReference>
<dbReference type="InterPro" id="IPR011059">
    <property type="entry name" value="Metal-dep_hydrolase_composite"/>
</dbReference>
<dbReference type="InterPro" id="IPR032466">
    <property type="entry name" value="Metal_Hydrolase"/>
</dbReference>
<dbReference type="NCBIfam" id="TIGR01178">
    <property type="entry name" value="ade"/>
    <property type="match status" value="1"/>
</dbReference>
<dbReference type="PANTHER" id="PTHR11113:SF2">
    <property type="entry name" value="ADENINE DEAMINASE"/>
    <property type="match status" value="1"/>
</dbReference>
<dbReference type="PANTHER" id="PTHR11113">
    <property type="entry name" value="N-ACETYLGLUCOSAMINE-6-PHOSPHATE DEACETYLASE"/>
    <property type="match status" value="1"/>
</dbReference>
<dbReference type="Pfam" id="PF13382">
    <property type="entry name" value="Adenine_deam_C"/>
    <property type="match status" value="1"/>
</dbReference>
<dbReference type="Pfam" id="PF01979">
    <property type="entry name" value="Amidohydro_1"/>
    <property type="match status" value="1"/>
</dbReference>
<dbReference type="SUPFAM" id="SSF51338">
    <property type="entry name" value="Composite domain of metallo-dependent hydrolases"/>
    <property type="match status" value="1"/>
</dbReference>
<dbReference type="SUPFAM" id="SSF51556">
    <property type="entry name" value="Metallo-dependent hydrolases"/>
    <property type="match status" value="1"/>
</dbReference>
<name>ADEC_DEHMB</name>
<keyword id="KW-0378">Hydrolase</keyword>
<keyword id="KW-0464">Manganese</keyword>
<sequence length="571" mass="61433">MQTNLSQLIKVARGETEADLVLLNARVINVFNAEIEQTNVAVFDGKIAGVGDYRHGKEVIDLKGAYLLPGLINGHTHVESSMLDIAQYARAVVSNGTLALITDLHEISNVCGKEGIDYVLDASADLPLSIFLQVPSCVPATHLETAGAEINSQDVADLLRLPNVTGLGEMMNFPGVLFGVPSVLDKIIAATGKVMDGHAPGLSGKDLNAYISAGIHSDHECIHLAEAKEKLARGMYIMIREGSSEKNLAELLPLVTDKTYKRCLFVVDDRSCADLKSDGDIDAVVRKAIRLGLDPVRAIQLASINTAEYFHLQGHGAIAPGYLANMIVCQNLEQLDIDMVFHKGKLVAEKGQALFKPQSRIPKSLLNSIHIKPFNTEDLVLKTIQPQIPVIEVIPGQIVTRRLDLKITAENGVIKANTELDLLKIVVLERHHQSGNIGHGLIRGFGLKKGAIASSVAHDSHNVVAVGTNDADLYTAIKELERINGGIALAVDGQVTASVSLPVAGLLSTKPLEEVVTELEEINNQVAKLGCKLSAPFATLSFMALPVIPELRLTDLGLVDVKTFKLIPQET</sequence>
<proteinExistence type="inferred from homology"/>
<gene>
    <name evidence="1" type="primary">ade</name>
    <name type="ordered locus">DehaBAV1_0717</name>
</gene>
<organism>
    <name type="scientific">Dehalococcoides mccartyi (strain ATCC BAA-2100 / JCM 16839 / KCTC 5957 / BAV1)</name>
    <dbReference type="NCBI Taxonomy" id="216389"/>
    <lineage>
        <taxon>Bacteria</taxon>
        <taxon>Bacillati</taxon>
        <taxon>Chloroflexota</taxon>
        <taxon>Dehalococcoidia</taxon>
        <taxon>Dehalococcoidales</taxon>
        <taxon>Dehalococcoidaceae</taxon>
        <taxon>Dehalococcoides</taxon>
    </lineage>
</organism>